<evidence type="ECO:0000255" key="1">
    <source>
        <dbReference type="HAMAP-Rule" id="MF_01147"/>
    </source>
</evidence>
<organism>
    <name type="scientific">Phenylobacterium zucineum (strain HLK1)</name>
    <dbReference type="NCBI Taxonomy" id="450851"/>
    <lineage>
        <taxon>Bacteria</taxon>
        <taxon>Pseudomonadati</taxon>
        <taxon>Pseudomonadota</taxon>
        <taxon>Alphaproteobacteria</taxon>
        <taxon>Caulobacterales</taxon>
        <taxon>Caulobacteraceae</taxon>
        <taxon>Phenylobacterium</taxon>
    </lineage>
</organism>
<name>LGT_PHEZH</name>
<accession>B4R8Q2</accession>
<gene>
    <name evidence="1" type="primary">lgt</name>
    <name type="ordered locus">PHZ_c2858</name>
</gene>
<reference key="1">
    <citation type="journal article" date="2008" name="BMC Genomics">
        <title>Complete genome of Phenylobacterium zucineum - a novel facultative intracellular bacterium isolated from human erythroleukemia cell line K562.</title>
        <authorList>
            <person name="Luo Y."/>
            <person name="Xu X."/>
            <person name="Ding Z."/>
            <person name="Liu Z."/>
            <person name="Zhang B."/>
            <person name="Yan Z."/>
            <person name="Sun J."/>
            <person name="Hu S."/>
            <person name="Hu X."/>
        </authorList>
    </citation>
    <scope>NUCLEOTIDE SEQUENCE [LARGE SCALE GENOMIC DNA]</scope>
    <source>
        <strain>HLK1</strain>
    </source>
</reference>
<dbReference type="EC" id="2.5.1.145" evidence="1"/>
<dbReference type="EMBL" id="CP000747">
    <property type="protein sequence ID" value="ACG79267.1"/>
    <property type="molecule type" value="Genomic_DNA"/>
</dbReference>
<dbReference type="RefSeq" id="WP_012523405.1">
    <property type="nucleotide sequence ID" value="NC_011144.1"/>
</dbReference>
<dbReference type="SMR" id="B4R8Q2"/>
<dbReference type="STRING" id="450851.PHZ_c2858"/>
<dbReference type="KEGG" id="pzu:PHZ_c2858"/>
<dbReference type="eggNOG" id="COG0682">
    <property type="taxonomic scope" value="Bacteria"/>
</dbReference>
<dbReference type="HOGENOM" id="CLU_013386_1_0_5"/>
<dbReference type="OrthoDB" id="871140at2"/>
<dbReference type="UniPathway" id="UPA00664"/>
<dbReference type="Proteomes" id="UP000001868">
    <property type="component" value="Chromosome"/>
</dbReference>
<dbReference type="GO" id="GO:0005886">
    <property type="term" value="C:plasma membrane"/>
    <property type="evidence" value="ECO:0007669"/>
    <property type="project" value="UniProtKB-SubCell"/>
</dbReference>
<dbReference type="GO" id="GO:0008961">
    <property type="term" value="F:phosphatidylglycerol-prolipoprotein diacylglyceryl transferase activity"/>
    <property type="evidence" value="ECO:0007669"/>
    <property type="project" value="UniProtKB-UniRule"/>
</dbReference>
<dbReference type="GO" id="GO:0042158">
    <property type="term" value="P:lipoprotein biosynthetic process"/>
    <property type="evidence" value="ECO:0007669"/>
    <property type="project" value="UniProtKB-UniRule"/>
</dbReference>
<dbReference type="HAMAP" id="MF_01147">
    <property type="entry name" value="Lgt"/>
    <property type="match status" value="1"/>
</dbReference>
<dbReference type="InterPro" id="IPR001640">
    <property type="entry name" value="Lgt"/>
</dbReference>
<dbReference type="NCBIfam" id="TIGR00544">
    <property type="entry name" value="lgt"/>
    <property type="match status" value="1"/>
</dbReference>
<dbReference type="PANTHER" id="PTHR30589:SF0">
    <property type="entry name" value="PHOSPHATIDYLGLYCEROL--PROLIPOPROTEIN DIACYLGLYCERYL TRANSFERASE"/>
    <property type="match status" value="1"/>
</dbReference>
<dbReference type="PANTHER" id="PTHR30589">
    <property type="entry name" value="PROLIPOPROTEIN DIACYLGLYCERYL TRANSFERASE"/>
    <property type="match status" value="1"/>
</dbReference>
<dbReference type="Pfam" id="PF01790">
    <property type="entry name" value="LGT"/>
    <property type="match status" value="1"/>
</dbReference>
<dbReference type="PROSITE" id="PS01311">
    <property type="entry name" value="LGT"/>
    <property type="match status" value="1"/>
</dbReference>
<feature type="chain" id="PRO_1000164145" description="Phosphatidylglycerol--prolipoprotein diacylglyceryl transferase">
    <location>
        <begin position="1"/>
        <end position="289"/>
    </location>
</feature>
<feature type="transmembrane region" description="Helical" evidence="1">
    <location>
        <begin position="13"/>
        <end position="33"/>
    </location>
</feature>
<feature type="transmembrane region" description="Helical" evidence="1">
    <location>
        <begin position="61"/>
        <end position="81"/>
    </location>
</feature>
<feature type="transmembrane region" description="Helical" evidence="1">
    <location>
        <begin position="99"/>
        <end position="119"/>
    </location>
</feature>
<feature type="transmembrane region" description="Helical" evidence="1">
    <location>
        <begin position="218"/>
        <end position="238"/>
    </location>
</feature>
<feature type="transmembrane region" description="Helical" evidence="1">
    <location>
        <begin position="250"/>
        <end position="270"/>
    </location>
</feature>
<feature type="binding site" evidence="1">
    <location>
        <position position="144"/>
    </location>
    <ligand>
        <name>a 1,2-diacyl-sn-glycero-3-phospho-(1'-sn-glycerol)</name>
        <dbReference type="ChEBI" id="CHEBI:64716"/>
    </ligand>
</feature>
<comment type="function">
    <text evidence="1">Catalyzes the transfer of the diacylglyceryl group from phosphatidylglycerol to the sulfhydryl group of the N-terminal cysteine of a prolipoprotein, the first step in the formation of mature lipoproteins.</text>
</comment>
<comment type="catalytic activity">
    <reaction evidence="1">
        <text>L-cysteinyl-[prolipoprotein] + a 1,2-diacyl-sn-glycero-3-phospho-(1'-sn-glycerol) = an S-1,2-diacyl-sn-glyceryl-L-cysteinyl-[prolipoprotein] + sn-glycerol 1-phosphate + H(+)</text>
        <dbReference type="Rhea" id="RHEA:56712"/>
        <dbReference type="Rhea" id="RHEA-COMP:14679"/>
        <dbReference type="Rhea" id="RHEA-COMP:14680"/>
        <dbReference type="ChEBI" id="CHEBI:15378"/>
        <dbReference type="ChEBI" id="CHEBI:29950"/>
        <dbReference type="ChEBI" id="CHEBI:57685"/>
        <dbReference type="ChEBI" id="CHEBI:64716"/>
        <dbReference type="ChEBI" id="CHEBI:140658"/>
        <dbReference type="EC" id="2.5.1.145"/>
    </reaction>
</comment>
<comment type="pathway">
    <text evidence="1">Protein modification; lipoprotein biosynthesis (diacylglyceryl transfer).</text>
</comment>
<comment type="subcellular location">
    <subcellularLocation>
        <location evidence="1">Cell inner membrane</location>
        <topology evidence="1">Multi-pass membrane protein</topology>
    </subcellularLocation>
</comment>
<comment type="similarity">
    <text evidence="1">Belongs to the Lgt family.</text>
</comment>
<proteinExistence type="inferred from homology"/>
<protein>
    <recommendedName>
        <fullName evidence="1">Phosphatidylglycerol--prolipoprotein diacylglyceryl transferase</fullName>
        <ecNumber evidence="1">2.5.1.145</ecNumber>
    </recommendedName>
</protein>
<keyword id="KW-0997">Cell inner membrane</keyword>
<keyword id="KW-1003">Cell membrane</keyword>
<keyword id="KW-0472">Membrane</keyword>
<keyword id="KW-1185">Reference proteome</keyword>
<keyword id="KW-0808">Transferase</keyword>
<keyword id="KW-0812">Transmembrane</keyword>
<keyword id="KW-1133">Transmembrane helix</keyword>
<sequence>MPFPDFDPVLVQLGPLAIRWYALAYVAGILLGWRYAVAMVKNPRLWTHRPPPVTTEQVDDFILWVTLAIIVGGRLGHVLFYTPQIIWTDPLQILQIWNGGMSFHGGAIGVFLAIILFAMRNKVDLWRLGDLVAAVVPIGLFFGRVANFINGELWGRPTDAPWGVVFCNERIRETLGWCPAGEVARHPSQLYEAALEGIVLFLILRWATHGAKLLNRRGVVMGLFTTFYAVFRISLENVRQPDAGLENLPLGLTMGIYLSIPMLLFGLWLIWRGMREETPPALAPADKPA</sequence>